<comment type="function">
    <text>RNA-binding protein that binds to iron-responsive elements (IRES), which are stem-loop structures found in the 5'-UTR of ferritin, and delta aminolevulinic acid synthase mRNAs, and in the 3'-UTR of transferrin receptor mRNA. Binding to the IRE element in ferritin results in the repression of its mRNA translation. Binding of the protein to the transferrin receptor mRNA inhibits the degradation of this otherwise rapidly degraded mRNA.</text>
</comment>
<comment type="cofactor">
    <cofactor evidence="1">
        <name>[4Fe-4S] cluster</name>
        <dbReference type="ChEBI" id="CHEBI:49883"/>
    </cofactor>
    <text evidence="1">Binds 1 [4Fe-4S] cluster per subunit. [4Fe-4S]-binding affects RNA-binding activity, thereby inhibiting activity of the protein.</text>
</comment>
<comment type="subcellular location">
    <subcellularLocation>
        <location evidence="1">Cytoplasm</location>
    </subcellularLocation>
</comment>
<comment type="PTM">
    <text evidence="1">Ubiquitinated and degraded by the proteasome in presence of high level of iron and oxygen.</text>
</comment>
<comment type="similarity">
    <text evidence="3">Belongs to the aconitase/IPM isomerase family.</text>
</comment>
<keyword id="KW-0004">4Fe-4S</keyword>
<keyword id="KW-0963">Cytoplasm</keyword>
<keyword id="KW-0408">Iron</keyword>
<keyword id="KW-0411">Iron-sulfur</keyword>
<keyword id="KW-0479">Metal-binding</keyword>
<keyword id="KW-0597">Phosphoprotein</keyword>
<keyword id="KW-1185">Reference proteome</keyword>
<keyword id="KW-0694">RNA-binding</keyword>
<keyword id="KW-0832">Ubl conjugation</keyword>
<gene>
    <name type="primary">IREB2</name>
    <name type="ORF">RCJMB04_5d21</name>
</gene>
<evidence type="ECO:0000250" key="1"/>
<evidence type="ECO:0000256" key="2">
    <source>
        <dbReference type="SAM" id="MobiDB-lite"/>
    </source>
</evidence>
<evidence type="ECO:0000305" key="3"/>
<organism>
    <name type="scientific">Gallus gallus</name>
    <name type="common">Chicken</name>
    <dbReference type="NCBI Taxonomy" id="9031"/>
    <lineage>
        <taxon>Eukaryota</taxon>
        <taxon>Metazoa</taxon>
        <taxon>Chordata</taxon>
        <taxon>Craniata</taxon>
        <taxon>Vertebrata</taxon>
        <taxon>Euteleostomi</taxon>
        <taxon>Archelosauria</taxon>
        <taxon>Archosauria</taxon>
        <taxon>Dinosauria</taxon>
        <taxon>Saurischia</taxon>
        <taxon>Theropoda</taxon>
        <taxon>Coelurosauria</taxon>
        <taxon>Aves</taxon>
        <taxon>Neognathae</taxon>
        <taxon>Galloanserae</taxon>
        <taxon>Galliformes</taxon>
        <taxon>Phasianidae</taxon>
        <taxon>Phasianinae</taxon>
        <taxon>Gallus</taxon>
    </lineage>
</organism>
<sequence length="965" mass="105362">MDALRPGSPYQPIIEELRNYPQKRFYNVSKLGGTKYDVLPYSIRVLFESSIRNCDGFLVKETDAMNILDWKTKQNDVEVPFCPARVVLQDFTGIPAMVDFAAMREAVRNAGGDPVKVNPACPTDLTVDHSLQIDFSKCAIQNAPNPGGGEAQKPTAKLSPLKGQPRKLPCRGQSSCKGPCSAGELSRASGQFSAQIENTPILCPFHLQPVPEPETVLKNQEMEFGRNRERLQFFKWSSKVFKNTSIIPPETGMAHQVNLEYLSRVVFDVEDFLYPDSVVGTDSHTTMVNGLGILGWGVGGIETEAVMLGMPVTLTLPEVVGCELTGTASPLATSIDIVLGITKHLRQAEVAGKFVEFFGSGVSQLSVADRTTIANMCPEYGAILSFFPVDNVTLKHLRHTGFDEAKLEVMEAYLKAVKLFRNGESSSREPEYSQVVQISLSSIIPHVSGPKRSQDRVAVNNMKSDFQTCLNEKAGVKGFQIAAEKQNDVVPVQYEGNQYELSHGCVVIAAVISCTNNCNPSVMLAAGLLAKKAVEAGLEVKPYIRTSLSPGSGMVTHYLSSSGVLPYLSKLGFEVVGYGCSTCVGNTAPLPEAIRNAIKQGDIIACGVLSGTKNFEGRLCDCVRANYLASPPLVVAYAIAGTVRIDFETEPLGTGFNGRSIYLRDIWPTRKELHTVEEECVISSMFKELKEKMEKGNKRWNSLEAPESPLFPWDLKSTYIRCPSFFDKLAKEPVSLQPIENAHVLLYLGDSVTTDHISPAGSIARSSAAAKYLTNKGLTPREFNSYGARRGNDAVMTRGTFANIKLLNKFIGKPAPKTIHFPSGQTLDVFEAAELYQKEGIPVIILAGKKYGLGSSRDWAAKGPFLLGVKAVLAESYEKVHKSQLIGIGIAPLQFLPGENPNTLGLTGREQFSILFPPELSPKMTLDIKTSTGKVFSVFALFENDVEITLYKNGGSLNFVARRFL</sequence>
<feature type="chain" id="PRO_0000380116" description="Iron-responsive element-binding protein 2">
    <location>
        <begin position="1"/>
        <end position="965"/>
    </location>
</feature>
<feature type="region of interest" description="Disordered" evidence="2">
    <location>
        <begin position="142"/>
        <end position="170"/>
    </location>
</feature>
<feature type="binding site" evidence="1">
    <location>
        <position position="514"/>
    </location>
    <ligand>
        <name>[4Fe-4S] cluster</name>
        <dbReference type="ChEBI" id="CHEBI:49883"/>
    </ligand>
</feature>
<feature type="binding site" evidence="1">
    <location>
        <position position="580"/>
    </location>
    <ligand>
        <name>[4Fe-4S] cluster</name>
        <dbReference type="ChEBI" id="CHEBI:49883"/>
    </ligand>
</feature>
<feature type="binding site" evidence="1">
    <location>
        <position position="583"/>
    </location>
    <ligand>
        <name>[4Fe-4S] cluster</name>
        <dbReference type="ChEBI" id="CHEBI:49883"/>
    </ligand>
</feature>
<dbReference type="EMBL" id="AJ719680">
    <property type="protein sequence ID" value="CAG31339.1"/>
    <property type="molecule type" value="mRNA"/>
</dbReference>
<dbReference type="RefSeq" id="NP_001026625.1">
    <property type="nucleotide sequence ID" value="NM_001031454.1"/>
</dbReference>
<dbReference type="SMR" id="Q5ZLQ4"/>
<dbReference type="FunCoup" id="Q5ZLQ4">
    <property type="interactions" value="874"/>
</dbReference>
<dbReference type="STRING" id="9031.ENSGALP00000054976"/>
<dbReference type="PaxDb" id="9031-ENSGALP00000038943"/>
<dbReference type="GeneID" id="427490"/>
<dbReference type="KEGG" id="gga:427490"/>
<dbReference type="CTD" id="3658"/>
<dbReference type="VEuPathDB" id="HostDB:geneid_427490"/>
<dbReference type="eggNOG" id="KOG0452">
    <property type="taxonomic scope" value="Eukaryota"/>
</dbReference>
<dbReference type="InParanoid" id="Q5ZLQ4"/>
<dbReference type="OrthoDB" id="2279155at2759"/>
<dbReference type="PhylomeDB" id="Q5ZLQ4"/>
<dbReference type="PRO" id="PR:Q5ZLQ4"/>
<dbReference type="Proteomes" id="UP000000539">
    <property type="component" value="Unassembled WGS sequence"/>
</dbReference>
<dbReference type="GO" id="GO:0005829">
    <property type="term" value="C:cytosol"/>
    <property type="evidence" value="ECO:0000318"/>
    <property type="project" value="GO_Central"/>
</dbReference>
<dbReference type="GO" id="GO:0051539">
    <property type="term" value="F:4 iron, 4 sulfur cluster binding"/>
    <property type="evidence" value="ECO:0000318"/>
    <property type="project" value="GO_Central"/>
</dbReference>
<dbReference type="GO" id="GO:0003994">
    <property type="term" value="F:aconitate hydratase activity"/>
    <property type="evidence" value="ECO:0000318"/>
    <property type="project" value="GO_Central"/>
</dbReference>
<dbReference type="GO" id="GO:0030350">
    <property type="term" value="F:iron-responsive element binding"/>
    <property type="evidence" value="ECO:0000318"/>
    <property type="project" value="GO_Central"/>
</dbReference>
<dbReference type="GO" id="GO:0046872">
    <property type="term" value="F:metal ion binding"/>
    <property type="evidence" value="ECO:0007669"/>
    <property type="project" value="UniProtKB-KW"/>
</dbReference>
<dbReference type="GO" id="GO:0006879">
    <property type="term" value="P:intracellular iron ion homeostasis"/>
    <property type="evidence" value="ECO:0000250"/>
    <property type="project" value="UniProtKB"/>
</dbReference>
<dbReference type="CDD" id="cd01586">
    <property type="entry name" value="AcnA_IRP"/>
    <property type="match status" value="1"/>
</dbReference>
<dbReference type="CDD" id="cd01580">
    <property type="entry name" value="AcnA_IRP_Swivel"/>
    <property type="match status" value="1"/>
</dbReference>
<dbReference type="FunFam" id="3.30.499.10:FF:000005">
    <property type="entry name" value="cytoplasmic aconitate hydratase"/>
    <property type="match status" value="1"/>
</dbReference>
<dbReference type="FunFam" id="3.30.499.10:FF:000011">
    <property type="entry name" value="Iron-responsive element binding protein 2"/>
    <property type="match status" value="1"/>
</dbReference>
<dbReference type="FunFam" id="3.30.499.10:FF:000012">
    <property type="entry name" value="Iron-responsive element binding protein 2"/>
    <property type="match status" value="1"/>
</dbReference>
<dbReference type="FunFam" id="3.20.19.10:FF:000005">
    <property type="entry name" value="Iron-responsive element-binding protein 2"/>
    <property type="match status" value="1"/>
</dbReference>
<dbReference type="Gene3D" id="6.10.190.10">
    <property type="match status" value="1"/>
</dbReference>
<dbReference type="Gene3D" id="3.30.499.10">
    <property type="entry name" value="Aconitase, domain 3"/>
    <property type="match status" value="3"/>
</dbReference>
<dbReference type="Gene3D" id="3.20.19.10">
    <property type="entry name" value="Aconitase, domain 4"/>
    <property type="match status" value="1"/>
</dbReference>
<dbReference type="InterPro" id="IPR044137">
    <property type="entry name" value="AcnA_IRP_Swivel"/>
</dbReference>
<dbReference type="InterPro" id="IPR015931">
    <property type="entry name" value="Acnase/IPM_dHydase_lsu_aba_1/3"/>
</dbReference>
<dbReference type="InterPro" id="IPR001030">
    <property type="entry name" value="Acoase/IPM_deHydtase_lsu_aba"/>
</dbReference>
<dbReference type="InterPro" id="IPR015928">
    <property type="entry name" value="Aconitase/3IPM_dehydase_swvl"/>
</dbReference>
<dbReference type="InterPro" id="IPR006249">
    <property type="entry name" value="Aconitase/IRP2"/>
</dbReference>
<dbReference type="InterPro" id="IPR018136">
    <property type="entry name" value="Aconitase_4Fe-4S_BS"/>
</dbReference>
<dbReference type="InterPro" id="IPR036008">
    <property type="entry name" value="Aconitase_4Fe-4S_dom"/>
</dbReference>
<dbReference type="InterPro" id="IPR000573">
    <property type="entry name" value="AconitaseA/IPMdHydase_ssu_swvl"/>
</dbReference>
<dbReference type="NCBIfam" id="TIGR01341">
    <property type="entry name" value="aconitase_1"/>
    <property type="match status" value="1"/>
</dbReference>
<dbReference type="NCBIfam" id="NF006757">
    <property type="entry name" value="PRK09277.1"/>
    <property type="match status" value="1"/>
</dbReference>
<dbReference type="NCBIfam" id="NF009520">
    <property type="entry name" value="PRK12881.1"/>
    <property type="match status" value="1"/>
</dbReference>
<dbReference type="PANTHER" id="PTHR11670">
    <property type="entry name" value="ACONITASE/IRON-RESPONSIVE ELEMENT FAMILY MEMBER"/>
    <property type="match status" value="1"/>
</dbReference>
<dbReference type="Pfam" id="PF00330">
    <property type="entry name" value="Aconitase"/>
    <property type="match status" value="2"/>
</dbReference>
<dbReference type="Pfam" id="PF00694">
    <property type="entry name" value="Aconitase_C"/>
    <property type="match status" value="1"/>
</dbReference>
<dbReference type="PRINTS" id="PR00415">
    <property type="entry name" value="ACONITASE"/>
</dbReference>
<dbReference type="SUPFAM" id="SSF53732">
    <property type="entry name" value="Aconitase iron-sulfur domain"/>
    <property type="match status" value="1"/>
</dbReference>
<dbReference type="SUPFAM" id="SSF52016">
    <property type="entry name" value="LeuD/IlvD-like"/>
    <property type="match status" value="1"/>
</dbReference>
<dbReference type="PROSITE" id="PS00450">
    <property type="entry name" value="ACONITASE_1"/>
    <property type="match status" value="1"/>
</dbReference>
<dbReference type="PROSITE" id="PS01244">
    <property type="entry name" value="ACONITASE_2"/>
    <property type="match status" value="1"/>
</dbReference>
<protein>
    <recommendedName>
        <fullName>Iron-responsive element-binding protein 2</fullName>
        <shortName>IRE-BP 2</shortName>
    </recommendedName>
</protein>
<accession>Q5ZLQ4</accession>
<name>IREB2_CHICK</name>
<reference key="1">
    <citation type="journal article" date="2005" name="Genome Biol.">
        <title>Full-length cDNAs from chicken bursal lymphocytes to facilitate gene function analysis.</title>
        <authorList>
            <person name="Caldwell R.B."/>
            <person name="Kierzek A.M."/>
            <person name="Arakawa H."/>
            <person name="Bezzubov Y."/>
            <person name="Zaim J."/>
            <person name="Fiedler P."/>
            <person name="Kutter S."/>
            <person name="Blagodatski A."/>
            <person name="Kostovska D."/>
            <person name="Koter M."/>
            <person name="Plachy J."/>
            <person name="Carninci P."/>
            <person name="Hayashizaki Y."/>
            <person name="Buerstedde J.-M."/>
        </authorList>
    </citation>
    <scope>NUCLEOTIDE SEQUENCE [LARGE SCALE MRNA]</scope>
    <source>
        <strain>CB</strain>
        <tissue>Bursa of Fabricius</tissue>
    </source>
</reference>
<proteinExistence type="evidence at transcript level"/>